<evidence type="ECO:0000250" key="1"/>
<evidence type="ECO:0000255" key="2">
    <source>
        <dbReference type="PROSITE-ProRule" id="PRU00448"/>
    </source>
</evidence>
<evidence type="ECO:0000305" key="3"/>
<accession>Q3SB11</accession>
<proteinExistence type="evidence at transcript level"/>
<protein>
    <recommendedName>
        <fullName>Calglandulin</fullName>
    </recommendedName>
</protein>
<dbReference type="EMBL" id="DQ084031">
    <property type="protein sequence ID" value="AAZ38976.1"/>
    <property type="molecule type" value="mRNA"/>
</dbReference>
<dbReference type="SMR" id="Q3SB11"/>
<dbReference type="GO" id="GO:0005737">
    <property type="term" value="C:cytoplasm"/>
    <property type="evidence" value="ECO:0007669"/>
    <property type="project" value="UniProtKB-SubCell"/>
</dbReference>
<dbReference type="GO" id="GO:0016460">
    <property type="term" value="C:myosin II complex"/>
    <property type="evidence" value="ECO:0007669"/>
    <property type="project" value="TreeGrafter"/>
</dbReference>
<dbReference type="GO" id="GO:0005509">
    <property type="term" value="F:calcium ion binding"/>
    <property type="evidence" value="ECO:0007669"/>
    <property type="project" value="InterPro"/>
</dbReference>
<dbReference type="CDD" id="cd00051">
    <property type="entry name" value="EFh"/>
    <property type="match status" value="1"/>
</dbReference>
<dbReference type="FunFam" id="1.10.238.10:FF:000163">
    <property type="entry name" value="Calmodulin like 6"/>
    <property type="match status" value="1"/>
</dbReference>
<dbReference type="Gene3D" id="1.10.238.10">
    <property type="entry name" value="EF-hand"/>
    <property type="match status" value="2"/>
</dbReference>
<dbReference type="InterPro" id="IPR050230">
    <property type="entry name" value="CALM/Myosin/TropC-like"/>
</dbReference>
<dbReference type="InterPro" id="IPR011992">
    <property type="entry name" value="EF-hand-dom_pair"/>
</dbReference>
<dbReference type="InterPro" id="IPR018247">
    <property type="entry name" value="EF_Hand_1_Ca_BS"/>
</dbReference>
<dbReference type="InterPro" id="IPR002048">
    <property type="entry name" value="EF_hand_dom"/>
</dbReference>
<dbReference type="PANTHER" id="PTHR23048:SF56">
    <property type="entry name" value="CALMODULIN 2"/>
    <property type="match status" value="1"/>
</dbReference>
<dbReference type="PANTHER" id="PTHR23048">
    <property type="entry name" value="MYOSIN LIGHT CHAIN 1, 3"/>
    <property type="match status" value="1"/>
</dbReference>
<dbReference type="Pfam" id="PF13499">
    <property type="entry name" value="EF-hand_7"/>
    <property type="match status" value="1"/>
</dbReference>
<dbReference type="Pfam" id="PF13833">
    <property type="entry name" value="EF-hand_8"/>
    <property type="match status" value="1"/>
</dbReference>
<dbReference type="SMART" id="SM00054">
    <property type="entry name" value="EFh"/>
    <property type="match status" value="4"/>
</dbReference>
<dbReference type="SUPFAM" id="SSF47473">
    <property type="entry name" value="EF-hand"/>
    <property type="match status" value="1"/>
</dbReference>
<dbReference type="PROSITE" id="PS00018">
    <property type="entry name" value="EF_HAND_1"/>
    <property type="match status" value="1"/>
</dbReference>
<dbReference type="PROSITE" id="PS50222">
    <property type="entry name" value="EF_HAND_2"/>
    <property type="match status" value="4"/>
</dbReference>
<comment type="function">
    <text evidence="1">May be involved in the cellular control mechanism of the secretion of toxins from the gland into the venom.</text>
</comment>
<comment type="subcellular location">
    <subcellularLocation>
        <location evidence="3">Cytoplasm</location>
    </subcellularLocation>
    <text evidence="1">Not found in venom.</text>
</comment>
<comment type="tissue specificity">
    <text>Expressed by the venom gland.</text>
</comment>
<comment type="similarity">
    <text evidence="3">Belongs to the calmodulin family. Calglandulin subfamily.</text>
</comment>
<keyword id="KW-0106">Calcium</keyword>
<keyword id="KW-0963">Cytoplasm</keyword>
<keyword id="KW-0479">Metal-binding</keyword>
<keyword id="KW-0677">Repeat</keyword>
<feature type="chain" id="PRO_0000073557" description="Calglandulin">
    <location>
        <begin position="1"/>
        <end position="156"/>
    </location>
</feature>
<feature type="domain" description="EF-hand 1" evidence="2">
    <location>
        <begin position="8"/>
        <end position="43"/>
    </location>
</feature>
<feature type="domain" description="EF-hand 2" evidence="2">
    <location>
        <begin position="44"/>
        <end position="79"/>
    </location>
</feature>
<feature type="domain" description="EF-hand 3" evidence="2">
    <location>
        <begin position="82"/>
        <end position="117"/>
    </location>
</feature>
<feature type="domain" description="EF-hand 4" evidence="2">
    <location>
        <begin position="118"/>
        <end position="153"/>
    </location>
</feature>
<feature type="binding site" evidence="2">
    <location>
        <position position="131"/>
    </location>
    <ligand>
        <name>Ca(2+)</name>
        <dbReference type="ChEBI" id="CHEBI:29108"/>
    </ligand>
</feature>
<feature type="binding site" evidence="2">
    <location>
        <position position="133"/>
    </location>
    <ligand>
        <name>Ca(2+)</name>
        <dbReference type="ChEBI" id="CHEBI:29108"/>
    </ligand>
</feature>
<feature type="binding site" evidence="2">
    <location>
        <position position="135"/>
    </location>
    <ligand>
        <name>Ca(2+)</name>
        <dbReference type="ChEBI" id="CHEBI:29108"/>
    </ligand>
</feature>
<feature type="binding site" evidence="2">
    <location>
        <position position="137"/>
    </location>
    <ligand>
        <name>Ca(2+)</name>
        <dbReference type="ChEBI" id="CHEBI:29108"/>
    </ligand>
</feature>
<feature type="binding site" evidence="2">
    <location>
        <position position="142"/>
    </location>
    <ligand>
        <name>Ca(2+)</name>
        <dbReference type="ChEBI" id="CHEBI:29108"/>
    </ligand>
</feature>
<organism>
    <name type="scientific">Tropidechis carinatus</name>
    <name type="common">Australian rough-scaled snake</name>
    <dbReference type="NCBI Taxonomy" id="100989"/>
    <lineage>
        <taxon>Eukaryota</taxon>
        <taxon>Metazoa</taxon>
        <taxon>Chordata</taxon>
        <taxon>Craniata</taxon>
        <taxon>Vertebrata</taxon>
        <taxon>Euteleostomi</taxon>
        <taxon>Lepidosauria</taxon>
        <taxon>Squamata</taxon>
        <taxon>Bifurcata</taxon>
        <taxon>Unidentata</taxon>
        <taxon>Episquamata</taxon>
        <taxon>Toxicofera</taxon>
        <taxon>Serpentes</taxon>
        <taxon>Colubroidea</taxon>
        <taxon>Elapidae</taxon>
        <taxon>Notechinae</taxon>
        <taxon>Tropidechis</taxon>
    </lineage>
</organism>
<sequence>MAATLTPEQITEYKGIFEMFDEEGNGLVKTDDLESLMSLIGINPTKRDLANMAKDVDKDKKGTFNCEGFLVLMGIYHEKSKNQDEELRAAFKVFDKEHKGYIEWDTLKYVLMNAGEPLNEHEAELMMKEADKDGDGTIDYEEFVAMMTGESFKLTQ</sequence>
<name>CALGL_TROCA</name>
<reference key="1">
    <citation type="journal article" date="2005" name="Cell. Mol. Life Sci.">
        <title>Identification and analysis of venom gland-specific genes from the coastal taipan (Oxyuranus scutellatus) and related species.</title>
        <authorList>
            <person name="St Pierre L."/>
            <person name="Woods R."/>
            <person name="Earl S.T.H."/>
            <person name="Masci P.P."/>
            <person name="Lavin M.F."/>
        </authorList>
    </citation>
    <scope>NUCLEOTIDE SEQUENCE [MRNA]</scope>
    <source>
        <tissue>Venom gland</tissue>
    </source>
</reference>